<organism>
    <name type="scientific">Clostridium botulinum (strain Kyoto / Type A2)</name>
    <dbReference type="NCBI Taxonomy" id="536232"/>
    <lineage>
        <taxon>Bacteria</taxon>
        <taxon>Bacillati</taxon>
        <taxon>Bacillota</taxon>
        <taxon>Clostridia</taxon>
        <taxon>Eubacteriales</taxon>
        <taxon>Clostridiaceae</taxon>
        <taxon>Clostridium</taxon>
    </lineage>
</organism>
<name>COAD_CLOBJ</name>
<gene>
    <name evidence="1" type="primary">coaD</name>
    <name type="ordered locus">CLM_2793</name>
</gene>
<feature type="chain" id="PRO_1000123278" description="Phosphopantetheine adenylyltransferase">
    <location>
        <begin position="1"/>
        <end position="164"/>
    </location>
</feature>
<feature type="binding site" evidence="1">
    <location>
        <begin position="9"/>
        <end position="10"/>
    </location>
    <ligand>
        <name>ATP</name>
        <dbReference type="ChEBI" id="CHEBI:30616"/>
    </ligand>
</feature>
<feature type="binding site" evidence="1">
    <location>
        <position position="9"/>
    </location>
    <ligand>
        <name>substrate</name>
    </ligand>
</feature>
<feature type="binding site" evidence="1">
    <location>
        <position position="17"/>
    </location>
    <ligand>
        <name>ATP</name>
        <dbReference type="ChEBI" id="CHEBI:30616"/>
    </ligand>
</feature>
<feature type="binding site" evidence="1">
    <location>
        <position position="41"/>
    </location>
    <ligand>
        <name>substrate</name>
    </ligand>
</feature>
<feature type="binding site" evidence="1">
    <location>
        <position position="73"/>
    </location>
    <ligand>
        <name>substrate</name>
    </ligand>
</feature>
<feature type="binding site" evidence="1">
    <location>
        <position position="87"/>
    </location>
    <ligand>
        <name>substrate</name>
    </ligand>
</feature>
<feature type="binding site" evidence="1">
    <location>
        <begin position="88"/>
        <end position="90"/>
    </location>
    <ligand>
        <name>ATP</name>
        <dbReference type="ChEBI" id="CHEBI:30616"/>
    </ligand>
</feature>
<feature type="binding site" evidence="1">
    <location>
        <position position="98"/>
    </location>
    <ligand>
        <name>ATP</name>
        <dbReference type="ChEBI" id="CHEBI:30616"/>
    </ligand>
</feature>
<feature type="binding site" evidence="1">
    <location>
        <begin position="123"/>
        <end position="129"/>
    </location>
    <ligand>
        <name>ATP</name>
        <dbReference type="ChEBI" id="CHEBI:30616"/>
    </ligand>
</feature>
<feature type="site" description="Transition state stabilizer" evidence="1">
    <location>
        <position position="17"/>
    </location>
</feature>
<sequence length="164" mass="18667">MKTAVYPGSFDPITKGHLNIIKRASKVCDKLIVAVLVNPEKKGLFSVDERVEMIKRVTKKHSNVEVQCFSGLLIDFMKEKKSKVIIKGLRTMSDFEYEFKMALMNNKLDPNIETVFMMTNAKYSYLSSSSVKQVAMFGGCIKDLVPDEIIPDIKKKINHKKECI</sequence>
<accession>C1FSR3</accession>
<evidence type="ECO:0000255" key="1">
    <source>
        <dbReference type="HAMAP-Rule" id="MF_00151"/>
    </source>
</evidence>
<protein>
    <recommendedName>
        <fullName evidence="1">Phosphopantetheine adenylyltransferase</fullName>
        <ecNumber evidence="1">2.7.7.3</ecNumber>
    </recommendedName>
    <alternativeName>
        <fullName evidence="1">Dephospho-CoA pyrophosphorylase</fullName>
    </alternativeName>
    <alternativeName>
        <fullName evidence="1">Pantetheine-phosphate adenylyltransferase</fullName>
        <shortName evidence="1">PPAT</shortName>
    </alternativeName>
</protein>
<reference key="1">
    <citation type="submission" date="2008-10" db="EMBL/GenBank/DDBJ databases">
        <title>Genome sequence of Clostridium botulinum A2 Kyoto.</title>
        <authorList>
            <person name="Shrivastava S."/>
            <person name="Brinkac L.M."/>
            <person name="Brown J.L."/>
            <person name="Bruce D."/>
            <person name="Detter C.C."/>
            <person name="Johnson E.A."/>
            <person name="Munk C.A."/>
            <person name="Smith L.A."/>
            <person name="Smith T.J."/>
            <person name="Sutton G."/>
            <person name="Brettin T.S."/>
        </authorList>
    </citation>
    <scope>NUCLEOTIDE SEQUENCE [LARGE SCALE GENOMIC DNA]</scope>
    <source>
        <strain>Kyoto / Type A2</strain>
    </source>
</reference>
<proteinExistence type="inferred from homology"/>
<comment type="function">
    <text evidence="1">Reversibly transfers an adenylyl group from ATP to 4'-phosphopantetheine, yielding dephospho-CoA (dPCoA) and pyrophosphate.</text>
</comment>
<comment type="catalytic activity">
    <reaction evidence="1">
        <text>(R)-4'-phosphopantetheine + ATP + H(+) = 3'-dephospho-CoA + diphosphate</text>
        <dbReference type="Rhea" id="RHEA:19801"/>
        <dbReference type="ChEBI" id="CHEBI:15378"/>
        <dbReference type="ChEBI" id="CHEBI:30616"/>
        <dbReference type="ChEBI" id="CHEBI:33019"/>
        <dbReference type="ChEBI" id="CHEBI:57328"/>
        <dbReference type="ChEBI" id="CHEBI:61723"/>
        <dbReference type="EC" id="2.7.7.3"/>
    </reaction>
</comment>
<comment type="cofactor">
    <cofactor evidence="1">
        <name>Mg(2+)</name>
        <dbReference type="ChEBI" id="CHEBI:18420"/>
    </cofactor>
</comment>
<comment type="pathway">
    <text evidence="1">Cofactor biosynthesis; coenzyme A biosynthesis; CoA from (R)-pantothenate: step 4/5.</text>
</comment>
<comment type="subunit">
    <text evidence="1">Homohexamer.</text>
</comment>
<comment type="subcellular location">
    <subcellularLocation>
        <location evidence="1">Cytoplasm</location>
    </subcellularLocation>
</comment>
<comment type="similarity">
    <text evidence="1">Belongs to the bacterial CoaD family.</text>
</comment>
<dbReference type="EC" id="2.7.7.3" evidence="1"/>
<dbReference type="EMBL" id="CP001581">
    <property type="protein sequence ID" value="ACO85127.1"/>
    <property type="molecule type" value="Genomic_DNA"/>
</dbReference>
<dbReference type="RefSeq" id="WP_003388467.1">
    <property type="nucleotide sequence ID" value="NC_012563.1"/>
</dbReference>
<dbReference type="SMR" id="C1FSR3"/>
<dbReference type="GeneID" id="5186749"/>
<dbReference type="KEGG" id="cby:CLM_2793"/>
<dbReference type="eggNOG" id="COG0669">
    <property type="taxonomic scope" value="Bacteria"/>
</dbReference>
<dbReference type="HOGENOM" id="CLU_100149_0_1_9"/>
<dbReference type="UniPathway" id="UPA00241">
    <property type="reaction ID" value="UER00355"/>
</dbReference>
<dbReference type="Proteomes" id="UP000001374">
    <property type="component" value="Chromosome"/>
</dbReference>
<dbReference type="GO" id="GO:0005737">
    <property type="term" value="C:cytoplasm"/>
    <property type="evidence" value="ECO:0007669"/>
    <property type="project" value="UniProtKB-SubCell"/>
</dbReference>
<dbReference type="GO" id="GO:0005524">
    <property type="term" value="F:ATP binding"/>
    <property type="evidence" value="ECO:0007669"/>
    <property type="project" value="UniProtKB-KW"/>
</dbReference>
<dbReference type="GO" id="GO:0004595">
    <property type="term" value="F:pantetheine-phosphate adenylyltransferase activity"/>
    <property type="evidence" value="ECO:0007669"/>
    <property type="project" value="UniProtKB-UniRule"/>
</dbReference>
<dbReference type="GO" id="GO:0015937">
    <property type="term" value="P:coenzyme A biosynthetic process"/>
    <property type="evidence" value="ECO:0007669"/>
    <property type="project" value="UniProtKB-UniRule"/>
</dbReference>
<dbReference type="CDD" id="cd02163">
    <property type="entry name" value="PPAT"/>
    <property type="match status" value="1"/>
</dbReference>
<dbReference type="Gene3D" id="3.40.50.620">
    <property type="entry name" value="HUPs"/>
    <property type="match status" value="1"/>
</dbReference>
<dbReference type="HAMAP" id="MF_00151">
    <property type="entry name" value="PPAT_bact"/>
    <property type="match status" value="1"/>
</dbReference>
<dbReference type="InterPro" id="IPR004821">
    <property type="entry name" value="Cyt_trans-like"/>
</dbReference>
<dbReference type="InterPro" id="IPR001980">
    <property type="entry name" value="PPAT"/>
</dbReference>
<dbReference type="InterPro" id="IPR014729">
    <property type="entry name" value="Rossmann-like_a/b/a_fold"/>
</dbReference>
<dbReference type="NCBIfam" id="TIGR01510">
    <property type="entry name" value="coaD_prev_kdtB"/>
    <property type="match status" value="1"/>
</dbReference>
<dbReference type="NCBIfam" id="TIGR00125">
    <property type="entry name" value="cyt_tran_rel"/>
    <property type="match status" value="1"/>
</dbReference>
<dbReference type="PANTHER" id="PTHR21342">
    <property type="entry name" value="PHOSPHOPANTETHEINE ADENYLYLTRANSFERASE"/>
    <property type="match status" value="1"/>
</dbReference>
<dbReference type="PANTHER" id="PTHR21342:SF1">
    <property type="entry name" value="PHOSPHOPANTETHEINE ADENYLYLTRANSFERASE"/>
    <property type="match status" value="1"/>
</dbReference>
<dbReference type="Pfam" id="PF01467">
    <property type="entry name" value="CTP_transf_like"/>
    <property type="match status" value="1"/>
</dbReference>
<dbReference type="PRINTS" id="PR01020">
    <property type="entry name" value="LPSBIOSNTHSS"/>
</dbReference>
<dbReference type="SUPFAM" id="SSF52374">
    <property type="entry name" value="Nucleotidylyl transferase"/>
    <property type="match status" value="1"/>
</dbReference>
<keyword id="KW-0067">ATP-binding</keyword>
<keyword id="KW-0173">Coenzyme A biosynthesis</keyword>
<keyword id="KW-0963">Cytoplasm</keyword>
<keyword id="KW-0460">Magnesium</keyword>
<keyword id="KW-0547">Nucleotide-binding</keyword>
<keyword id="KW-0548">Nucleotidyltransferase</keyword>
<keyword id="KW-0808">Transferase</keyword>